<keyword id="KW-0406">Ion transport</keyword>
<keyword id="KW-0520">NAD</keyword>
<keyword id="KW-0915">Sodium</keyword>
<keyword id="KW-0739">Sodium transport</keyword>
<keyword id="KW-1278">Translocase</keyword>
<keyword id="KW-0813">Transport</keyword>
<keyword id="KW-0830">Ubiquinone</keyword>
<dbReference type="EC" id="7.2.1.1" evidence="1"/>
<dbReference type="EMBL" id="CP000687">
    <property type="protein sequence ID" value="ABY68755.1"/>
    <property type="molecule type" value="Genomic_DNA"/>
</dbReference>
<dbReference type="RefSeq" id="WP_012262715.1">
    <property type="nucleotide sequence ID" value="NC_010278.1"/>
</dbReference>
<dbReference type="SMR" id="B0BS55"/>
<dbReference type="KEGG" id="apj:APJL_0151"/>
<dbReference type="HOGENOM" id="CLU_046656_0_0_6"/>
<dbReference type="Proteomes" id="UP000008547">
    <property type="component" value="Chromosome"/>
</dbReference>
<dbReference type="GO" id="GO:0016655">
    <property type="term" value="F:oxidoreductase activity, acting on NAD(P)H, quinone or similar compound as acceptor"/>
    <property type="evidence" value="ECO:0007669"/>
    <property type="project" value="UniProtKB-UniRule"/>
</dbReference>
<dbReference type="GO" id="GO:0006814">
    <property type="term" value="P:sodium ion transport"/>
    <property type="evidence" value="ECO:0007669"/>
    <property type="project" value="UniProtKB-UniRule"/>
</dbReference>
<dbReference type="Gene3D" id="2.40.50.100">
    <property type="match status" value="1"/>
</dbReference>
<dbReference type="HAMAP" id="MF_00425">
    <property type="entry name" value="NqrA"/>
    <property type="match status" value="1"/>
</dbReference>
<dbReference type="InterPro" id="IPR008703">
    <property type="entry name" value="NqrA"/>
</dbReference>
<dbReference type="InterPro" id="IPR056148">
    <property type="entry name" value="NQRA_2nd"/>
</dbReference>
<dbReference type="InterPro" id="IPR022615">
    <property type="entry name" value="NqrA_C_domain"/>
</dbReference>
<dbReference type="InterPro" id="IPR056147">
    <property type="entry name" value="NQRA_N"/>
</dbReference>
<dbReference type="NCBIfam" id="TIGR01936">
    <property type="entry name" value="nqrA"/>
    <property type="match status" value="1"/>
</dbReference>
<dbReference type="NCBIfam" id="NF003759">
    <property type="entry name" value="PRK05352.1-2"/>
    <property type="match status" value="1"/>
</dbReference>
<dbReference type="PANTHER" id="PTHR37839">
    <property type="entry name" value="NA(+)-TRANSLOCATING NADH-QUINONE REDUCTASE SUBUNIT A"/>
    <property type="match status" value="1"/>
</dbReference>
<dbReference type="PANTHER" id="PTHR37839:SF1">
    <property type="entry name" value="NA(+)-TRANSLOCATING NADH-QUINONE REDUCTASE SUBUNIT A"/>
    <property type="match status" value="1"/>
</dbReference>
<dbReference type="Pfam" id="PF24836">
    <property type="entry name" value="NQRA_2nd"/>
    <property type="match status" value="1"/>
</dbReference>
<dbReference type="Pfam" id="PF05896">
    <property type="entry name" value="NQRA_N"/>
    <property type="match status" value="1"/>
</dbReference>
<dbReference type="Pfam" id="PF11973">
    <property type="entry name" value="NQRA_SLBB"/>
    <property type="match status" value="1"/>
</dbReference>
<protein>
    <recommendedName>
        <fullName evidence="1">Na(+)-translocating NADH-quinone reductase subunit A</fullName>
        <shortName evidence="1">Na(+)-NQR subunit A</shortName>
        <shortName evidence="1">Na(+)-translocating NQR subunit A</shortName>
        <ecNumber evidence="1">7.2.1.1</ecNumber>
    </recommendedName>
    <alternativeName>
        <fullName evidence="1">NQR complex subunit A</fullName>
    </alternativeName>
    <alternativeName>
        <fullName evidence="1">NQR-1 subunit A</fullName>
    </alternativeName>
</protein>
<organism>
    <name type="scientific">Actinobacillus pleuropneumoniae serotype 3 (strain JL03)</name>
    <dbReference type="NCBI Taxonomy" id="434271"/>
    <lineage>
        <taxon>Bacteria</taxon>
        <taxon>Pseudomonadati</taxon>
        <taxon>Pseudomonadota</taxon>
        <taxon>Gammaproteobacteria</taxon>
        <taxon>Pasteurellales</taxon>
        <taxon>Pasteurellaceae</taxon>
        <taxon>Actinobacillus</taxon>
    </lineage>
</organism>
<comment type="function">
    <text evidence="1">NQR complex catalyzes the reduction of ubiquinone-1 to ubiquinol by two successive reactions, coupled with the transport of Na(+) ions from the cytoplasm to the periplasm. NqrA to NqrE are probably involved in the second step, the conversion of ubisemiquinone to ubiquinol.</text>
</comment>
<comment type="catalytic activity">
    <reaction evidence="1">
        <text>a ubiquinone + n Na(+)(in) + NADH + H(+) = a ubiquinol + n Na(+)(out) + NAD(+)</text>
        <dbReference type="Rhea" id="RHEA:47748"/>
        <dbReference type="Rhea" id="RHEA-COMP:9565"/>
        <dbReference type="Rhea" id="RHEA-COMP:9566"/>
        <dbReference type="ChEBI" id="CHEBI:15378"/>
        <dbReference type="ChEBI" id="CHEBI:16389"/>
        <dbReference type="ChEBI" id="CHEBI:17976"/>
        <dbReference type="ChEBI" id="CHEBI:29101"/>
        <dbReference type="ChEBI" id="CHEBI:57540"/>
        <dbReference type="ChEBI" id="CHEBI:57945"/>
        <dbReference type="EC" id="7.2.1.1"/>
    </reaction>
</comment>
<comment type="subunit">
    <text evidence="1">Composed of six subunits; NqrA, NqrB, NqrC, NqrD, NqrE and NqrF.</text>
</comment>
<comment type="similarity">
    <text evidence="1">Belongs to the NqrA family.</text>
</comment>
<feature type="chain" id="PRO_1000124166" description="Na(+)-translocating NADH-quinone reductase subunit A">
    <location>
        <begin position="1"/>
        <end position="449"/>
    </location>
</feature>
<evidence type="ECO:0000255" key="1">
    <source>
        <dbReference type="HAMAP-Rule" id="MF_00425"/>
    </source>
</evidence>
<proteinExistence type="inferred from homology"/>
<reference key="1">
    <citation type="journal article" date="2008" name="PLoS ONE">
        <title>Genome biology of Actinobacillus pleuropneumoniae JL03, an isolate of serotype 3 prevalent in China.</title>
        <authorList>
            <person name="Xu Z."/>
            <person name="Zhou Y."/>
            <person name="Li L."/>
            <person name="Zhou R."/>
            <person name="Xiao S."/>
            <person name="Wan Y."/>
            <person name="Zhang S."/>
            <person name="Wang K."/>
            <person name="Li W."/>
            <person name="Li L."/>
            <person name="Jin H."/>
            <person name="Kang M."/>
            <person name="Dalai B."/>
            <person name="Li T."/>
            <person name="Liu L."/>
            <person name="Cheng Y."/>
            <person name="Zhang L."/>
            <person name="Xu T."/>
            <person name="Zheng H."/>
            <person name="Pu S."/>
            <person name="Wang B."/>
            <person name="Gu W."/>
            <person name="Zhang X.L."/>
            <person name="Zhu G.-F."/>
            <person name="Wang S."/>
            <person name="Zhao G.-P."/>
            <person name="Chen H."/>
        </authorList>
    </citation>
    <scope>NUCLEOTIDE SEQUENCE [LARGE SCALE GENOMIC DNA]</scope>
    <source>
        <strain>JL03</strain>
    </source>
</reference>
<name>NQRA_ACTPJ</name>
<sequence>MITIKKGLDLPIAGTPAQVIHNGNTVNEVATLGEEYVGMRPSMKVREGDVVKKGQVLFEDKKNPGVVFTAPASGTVVTINRGEKRVLQSVVIKVEGDEQITFTRYEAAQLASLSAEQVKQNLIESGLWTAFRTRPFSKVPALDAIPSSIFVNAMDTNPLAADPEVVLKEYETDFKDGLTVLTRLFNGQKPVYLCKDADSNIPLSPAIEGITIKSFSGVHPAGLVGTHIHFVDPVGATKQVWHLNYQDVIAIGKLFTTGELFTDRIISLAGPQVKNPRLVRTRLGANLSQLTANELNAGENRVISGSVLSGATAAGPVDYLGRYALQVSVLAEGREKELFGWIMPGSDKFSITRTVLGHFGKKLFNFTTAVHGGERAMVPIGAYERVMPLDIIPTLLLRDLAAGDTDSAQNLGCLELDEEDLALCTYVCPGKNNYGPMLRAALEKIEKEG</sequence>
<accession>B0BS55</accession>
<gene>
    <name evidence="1" type="primary">nqrA</name>
    <name type="ordered locus">APJL_0151</name>
</gene>